<reference key="1">
    <citation type="journal article" date="1993" name="J. Biol. Chem.">
        <title>Structure, chromosomal localization, and expression of mouse reg genes, reg I and reg II. A novel type of reg gene, reg II, exists in the mouse genome.</title>
        <authorList>
            <person name="Unno M."/>
            <person name="Yonekura H."/>
            <person name="Nakagawara K."/>
            <person name="Watanabe T."/>
            <person name="Miyashita H."/>
            <person name="Moriizumi S."/>
            <person name="Okamoto H."/>
            <person name="Itoh T."/>
            <person name="Teraoka H."/>
        </authorList>
    </citation>
    <scope>NUCLEOTIDE SEQUENCE [GENOMIC DNA]</scope>
    <source>
        <strain>C57BL/6J</strain>
    </source>
</reference>
<reference key="2">
    <citation type="journal article" date="2010" name="Cell">
        <title>A tissue-specific atlas of mouse protein phosphorylation and expression.</title>
        <authorList>
            <person name="Huttlin E.L."/>
            <person name="Jedrychowski M.P."/>
            <person name="Elias J.E."/>
            <person name="Goswami T."/>
            <person name="Rad R."/>
            <person name="Beausoleil S.A."/>
            <person name="Villen J."/>
            <person name="Haas W."/>
            <person name="Sowa M.E."/>
            <person name="Gygi S.P."/>
        </authorList>
    </citation>
    <scope>IDENTIFICATION BY MASS SPECTROMETRY [LARGE SCALE ANALYSIS]</scope>
    <source>
        <tissue>Liver</tissue>
        <tissue>Pancreas</tissue>
    </source>
</reference>
<organism>
    <name type="scientific">Mus musculus</name>
    <name type="common">Mouse</name>
    <dbReference type="NCBI Taxonomy" id="10090"/>
    <lineage>
        <taxon>Eukaryota</taxon>
        <taxon>Metazoa</taxon>
        <taxon>Chordata</taxon>
        <taxon>Craniata</taxon>
        <taxon>Vertebrata</taxon>
        <taxon>Euteleostomi</taxon>
        <taxon>Mammalia</taxon>
        <taxon>Eutheria</taxon>
        <taxon>Euarchontoglires</taxon>
        <taxon>Glires</taxon>
        <taxon>Rodentia</taxon>
        <taxon>Myomorpha</taxon>
        <taxon>Muroidea</taxon>
        <taxon>Muridae</taxon>
        <taxon>Murinae</taxon>
        <taxon>Mus</taxon>
        <taxon>Mus</taxon>
    </lineage>
</organism>
<evidence type="ECO:0000250" key="1"/>
<evidence type="ECO:0000255" key="2">
    <source>
        <dbReference type="PROSITE-ProRule" id="PRU00040"/>
    </source>
</evidence>
<protein>
    <recommendedName>
        <fullName>Lithostathine-2</fullName>
    </recommendedName>
    <alternativeName>
        <fullName>Islet of Langerhans regenerating protein 2</fullName>
        <shortName>REG-2</shortName>
    </alternativeName>
    <alternativeName>
        <fullName>Pancreatic stone protein 2</fullName>
        <shortName>PSP</shortName>
    </alternativeName>
    <alternativeName>
        <fullName>Pancreatic thread protein 2</fullName>
        <shortName>PTP</shortName>
    </alternativeName>
</protein>
<gene>
    <name type="primary">Reg2</name>
</gene>
<proteinExistence type="evidence at protein level"/>
<keyword id="KW-1015">Disulfide bond</keyword>
<keyword id="KW-0430">Lectin</keyword>
<keyword id="KW-1185">Reference proteome</keyword>
<keyword id="KW-0964">Secreted</keyword>
<keyword id="KW-0732">Signal</keyword>
<sequence length="173" mass="19407">MAQNNVYLILFLCLMFLSYSQGQVAEEDFPLAEKDLPSAKINCPEGANAYGSYCYYLIEDRLTWGEADLFCQNMNAGHLVSILSQAESNFVASLVKESGTTASNVWTGLHDPKSNRRWHWSSGSLFLFKSWATGAPSTANRGYCVSLTSNTAYKKWKDENCEAQYSFVCKFRA</sequence>
<feature type="signal peptide" evidence="1">
    <location>
        <begin position="1"/>
        <end position="22"/>
    </location>
</feature>
<feature type="chain" id="PRO_0000017427" description="Lithostathine-2">
    <location>
        <begin position="23"/>
        <end position="173"/>
    </location>
</feature>
<feature type="domain" description="C-type lectin" evidence="2">
    <location>
        <begin position="41"/>
        <end position="171"/>
    </location>
</feature>
<feature type="disulfide bond" evidence="2">
    <location>
        <begin position="43"/>
        <end position="54"/>
    </location>
</feature>
<feature type="disulfide bond" evidence="2">
    <location>
        <begin position="71"/>
        <end position="169"/>
    </location>
</feature>
<feature type="disulfide bond" evidence="2">
    <location>
        <begin position="144"/>
        <end position="161"/>
    </location>
</feature>
<comment type="function">
    <text>Might act as an inhibitor of spontaneous calcium carbonate precipitation.</text>
</comment>
<comment type="subcellular location">
    <subcellularLocation>
        <location evidence="1">Secreted</location>
    </subcellularLocation>
</comment>
<comment type="tissue specificity">
    <text>Expressed only in regenerating islets and normal exocrine pancreas, but not in normal pancreatic islets. Expressed strongly in pancreas, weakly in liver, but not at all in gall bladder.</text>
</comment>
<comment type="online information" name="Functional Glycomics Gateway - Glycan Binding">
    <link uri="http://www.functionalglycomics.org/glycomics/GBPServlet?&amp;operationType=view&amp;cbpId=cbp_mou_Ctlect_183"/>
    <text>Litho/Reg 1beta</text>
</comment>
<name>LIT2_MOUSE</name>
<accession>Q08731</accession>
<dbReference type="EMBL" id="D14011">
    <property type="protein sequence ID" value="BAA03112.1"/>
    <property type="molecule type" value="Genomic_DNA"/>
</dbReference>
<dbReference type="CCDS" id="CCDS20256.1"/>
<dbReference type="PIR" id="B47148">
    <property type="entry name" value="B47148"/>
</dbReference>
<dbReference type="RefSeq" id="NP_033069.1">
    <property type="nucleotide sequence ID" value="NM_009043.2"/>
</dbReference>
<dbReference type="SMR" id="Q08731"/>
<dbReference type="FunCoup" id="Q08731">
    <property type="interactions" value="100"/>
</dbReference>
<dbReference type="STRING" id="10090.ENSMUSP00000023906"/>
<dbReference type="MEROPS" id="I63.002"/>
<dbReference type="iPTMnet" id="Q08731"/>
<dbReference type="PhosphoSitePlus" id="Q08731"/>
<dbReference type="PaxDb" id="10090-ENSMUSP00000023906"/>
<dbReference type="PeptideAtlas" id="Q08731"/>
<dbReference type="ProteomicsDB" id="292336"/>
<dbReference type="DNASU" id="19693"/>
<dbReference type="Ensembl" id="ENSMUST00000023906.4">
    <property type="protein sequence ID" value="ENSMUSP00000023906.3"/>
    <property type="gene ID" value="ENSMUSG00000023140.5"/>
</dbReference>
<dbReference type="GeneID" id="19693"/>
<dbReference type="KEGG" id="mmu:19693"/>
<dbReference type="UCSC" id="uc009cjz.1">
    <property type="organism name" value="mouse"/>
</dbReference>
<dbReference type="AGR" id="MGI:97896"/>
<dbReference type="CTD" id="19693"/>
<dbReference type="MGI" id="MGI:97896">
    <property type="gene designation" value="Reg2"/>
</dbReference>
<dbReference type="VEuPathDB" id="HostDB:ENSMUSG00000023140"/>
<dbReference type="eggNOG" id="KOG4297">
    <property type="taxonomic scope" value="Eukaryota"/>
</dbReference>
<dbReference type="GeneTree" id="ENSGT00940000162393"/>
<dbReference type="HOGENOM" id="CLU_049894_18_0_1"/>
<dbReference type="InParanoid" id="Q08731"/>
<dbReference type="OMA" id="QRFCKIK"/>
<dbReference type="OrthoDB" id="441660at2759"/>
<dbReference type="PhylomeDB" id="Q08731"/>
<dbReference type="BioGRID-ORCS" id="19693">
    <property type="hits" value="0 hits in 79 CRISPR screens"/>
</dbReference>
<dbReference type="ChiTaRS" id="Reg2">
    <property type="organism name" value="mouse"/>
</dbReference>
<dbReference type="PRO" id="PR:Q08731"/>
<dbReference type="Proteomes" id="UP000000589">
    <property type="component" value="Chromosome 6"/>
</dbReference>
<dbReference type="RNAct" id="Q08731">
    <property type="molecule type" value="protein"/>
</dbReference>
<dbReference type="Bgee" id="ENSMUSG00000023140">
    <property type="expression patterns" value="Expressed in pyloric antrum and 35 other cell types or tissues"/>
</dbReference>
<dbReference type="ExpressionAtlas" id="Q08731">
    <property type="expression patterns" value="baseline and differential"/>
</dbReference>
<dbReference type="GO" id="GO:0062023">
    <property type="term" value="C:collagen-containing extracellular matrix"/>
    <property type="evidence" value="ECO:0007005"/>
    <property type="project" value="BHF-UCL"/>
</dbReference>
<dbReference type="GO" id="GO:0005576">
    <property type="term" value="C:extracellular region"/>
    <property type="evidence" value="ECO:0007669"/>
    <property type="project" value="UniProtKB-SubCell"/>
</dbReference>
<dbReference type="GO" id="GO:0030246">
    <property type="term" value="F:carbohydrate binding"/>
    <property type="evidence" value="ECO:0007669"/>
    <property type="project" value="UniProtKB-KW"/>
</dbReference>
<dbReference type="GO" id="GO:0042552">
    <property type="term" value="P:myelination"/>
    <property type="evidence" value="ECO:0000315"/>
    <property type="project" value="MGI"/>
</dbReference>
<dbReference type="GO" id="GO:0001967">
    <property type="term" value="P:suckling behavior"/>
    <property type="evidence" value="ECO:0000315"/>
    <property type="project" value="MGI"/>
</dbReference>
<dbReference type="FunFam" id="3.10.100.10:FF:000059">
    <property type="entry name" value="Regenerating islet-derived 1"/>
    <property type="match status" value="1"/>
</dbReference>
<dbReference type="Gene3D" id="3.10.100.10">
    <property type="entry name" value="Mannose-Binding Protein A, subunit A"/>
    <property type="match status" value="1"/>
</dbReference>
<dbReference type="InterPro" id="IPR001304">
    <property type="entry name" value="C-type_lectin-like"/>
</dbReference>
<dbReference type="InterPro" id="IPR016186">
    <property type="entry name" value="C-type_lectin-like/link_sf"/>
</dbReference>
<dbReference type="InterPro" id="IPR050111">
    <property type="entry name" value="C-type_lectin/snaclec_domain"/>
</dbReference>
<dbReference type="InterPro" id="IPR018378">
    <property type="entry name" value="C-type_lectin_CS"/>
</dbReference>
<dbReference type="InterPro" id="IPR016187">
    <property type="entry name" value="CTDL_fold"/>
</dbReference>
<dbReference type="PANTHER" id="PTHR22803">
    <property type="entry name" value="MANNOSE, PHOSPHOLIPASE, LECTIN RECEPTOR RELATED"/>
    <property type="match status" value="1"/>
</dbReference>
<dbReference type="Pfam" id="PF00059">
    <property type="entry name" value="Lectin_C"/>
    <property type="match status" value="1"/>
</dbReference>
<dbReference type="PRINTS" id="PR01504">
    <property type="entry name" value="PNCREATITSAP"/>
</dbReference>
<dbReference type="SMART" id="SM00034">
    <property type="entry name" value="CLECT"/>
    <property type="match status" value="1"/>
</dbReference>
<dbReference type="SUPFAM" id="SSF56436">
    <property type="entry name" value="C-type lectin-like"/>
    <property type="match status" value="1"/>
</dbReference>
<dbReference type="PROSITE" id="PS00615">
    <property type="entry name" value="C_TYPE_LECTIN_1"/>
    <property type="match status" value="1"/>
</dbReference>
<dbReference type="PROSITE" id="PS50041">
    <property type="entry name" value="C_TYPE_LECTIN_2"/>
    <property type="match status" value="1"/>
</dbReference>